<feature type="initiator methionine" description="Removed" evidence="2">
    <location>
        <position position="1"/>
    </location>
</feature>
<feature type="chain" id="PRO_0000392984" description="3-hydroxyisobutyryl-CoA hydrolase-like protein 5">
    <location>
        <begin position="2"/>
        <end position="387"/>
    </location>
</feature>
<feature type="modified residue" description="N-acetylalanine" evidence="2">
    <location>
        <position position="2"/>
    </location>
</feature>
<comment type="similarity">
    <text evidence="1">Belongs to the enoyl-CoA hydratase/isomerase family.</text>
</comment>
<comment type="sequence caution" evidence="1">
    <conflict type="erroneous gene model prediction">
        <sequence resource="EMBL-CDS" id="AAF24814"/>
    </conflict>
</comment>
<gene>
    <name type="ordered locus">At1g06550</name>
    <name type="ORF">F12K11.12</name>
</gene>
<accession>Q9SHJ8</accession>
<accession>Q56XU5</accession>
<keyword id="KW-0007">Acetylation</keyword>
<keyword id="KW-0378">Hydrolase</keyword>
<keyword id="KW-1185">Reference proteome</keyword>
<sequence>MAQEGQNIDEPVVIGEEKGSVRLTTLNRPRQLNVISPEVVFKLAEYLELWEKDDQTKLILIKGTGRAFSAGGDLKVFYHGQESKDSCLEVVYRMYWLCYHIHTYKKTQVSLVNGISMGGGAALMVPMKFSVVTEKTVFATPEASFGFHTDCGFSYIHSRLPGHLGEFLALTGARLNGKELVAIGMATHFVPSGKLMDLEARLVSLDSGDADVVQSTIEEFSEKVNLDKDSILNKQSVINECFSKESVKQIIQAFEAEASKDGNEWITPVIKGLKRSSPTGLKIVLQSIREGRKQTLSDCLKKEFRLTLNILRKTISPDMYEGIRALTIDKDNSPKWNPATLDEVDDEKINSVFKLFEDDDIELQIPETEENRWGGKYETSGYASVRG</sequence>
<organism>
    <name type="scientific">Arabidopsis thaliana</name>
    <name type="common">Mouse-ear cress</name>
    <dbReference type="NCBI Taxonomy" id="3702"/>
    <lineage>
        <taxon>Eukaryota</taxon>
        <taxon>Viridiplantae</taxon>
        <taxon>Streptophyta</taxon>
        <taxon>Embryophyta</taxon>
        <taxon>Tracheophyta</taxon>
        <taxon>Spermatophyta</taxon>
        <taxon>Magnoliopsida</taxon>
        <taxon>eudicotyledons</taxon>
        <taxon>Gunneridae</taxon>
        <taxon>Pentapetalae</taxon>
        <taxon>rosids</taxon>
        <taxon>malvids</taxon>
        <taxon>Brassicales</taxon>
        <taxon>Brassicaceae</taxon>
        <taxon>Camelineae</taxon>
        <taxon>Arabidopsis</taxon>
    </lineage>
</organism>
<evidence type="ECO:0000305" key="1"/>
<evidence type="ECO:0007744" key="2">
    <source>
    </source>
</evidence>
<dbReference type="EC" id="3.1.2.-"/>
<dbReference type="EMBL" id="AC007592">
    <property type="protein sequence ID" value="AAF24814.1"/>
    <property type="status" value="ALT_SEQ"/>
    <property type="molecule type" value="Genomic_DNA"/>
</dbReference>
<dbReference type="EMBL" id="CP002684">
    <property type="protein sequence ID" value="AEE28004.1"/>
    <property type="molecule type" value="Genomic_DNA"/>
</dbReference>
<dbReference type="EMBL" id="AK221578">
    <property type="protein sequence ID" value="BAD95058.1"/>
    <property type="molecule type" value="mRNA"/>
</dbReference>
<dbReference type="EMBL" id="BT022051">
    <property type="protein sequence ID" value="AAY25463.1"/>
    <property type="molecule type" value="mRNA"/>
</dbReference>
<dbReference type="EMBL" id="BT026035">
    <property type="protein sequence ID" value="ABG48391.1"/>
    <property type="molecule type" value="mRNA"/>
</dbReference>
<dbReference type="RefSeq" id="NP_172142.2">
    <property type="nucleotide sequence ID" value="NM_100534.4"/>
</dbReference>
<dbReference type="SMR" id="Q9SHJ8"/>
<dbReference type="FunCoup" id="Q9SHJ8">
    <property type="interactions" value="1816"/>
</dbReference>
<dbReference type="STRING" id="3702.Q9SHJ8"/>
<dbReference type="iPTMnet" id="Q9SHJ8"/>
<dbReference type="PaxDb" id="3702-AT1G06550.1"/>
<dbReference type="ProteomicsDB" id="230389"/>
<dbReference type="EnsemblPlants" id="AT1G06550.1">
    <property type="protein sequence ID" value="AT1G06550.1"/>
    <property type="gene ID" value="AT1G06550"/>
</dbReference>
<dbReference type="GeneID" id="837166"/>
<dbReference type="Gramene" id="AT1G06550.1">
    <property type="protein sequence ID" value="AT1G06550.1"/>
    <property type="gene ID" value="AT1G06550"/>
</dbReference>
<dbReference type="KEGG" id="ath:AT1G06550"/>
<dbReference type="Araport" id="AT1G06550"/>
<dbReference type="TAIR" id="AT1G06550"/>
<dbReference type="eggNOG" id="ENOG502QTE8">
    <property type="taxonomic scope" value="Eukaryota"/>
</dbReference>
<dbReference type="HOGENOM" id="CLU_009834_22_1_1"/>
<dbReference type="InParanoid" id="Q9SHJ8"/>
<dbReference type="OMA" id="LVWEQIR"/>
<dbReference type="OrthoDB" id="16820at2759"/>
<dbReference type="PhylomeDB" id="Q9SHJ8"/>
<dbReference type="BioCyc" id="ARA:AT1G06550-MONOMER"/>
<dbReference type="PRO" id="PR:Q9SHJ8"/>
<dbReference type="Proteomes" id="UP000006548">
    <property type="component" value="Chromosome 1"/>
</dbReference>
<dbReference type="ExpressionAtlas" id="Q9SHJ8">
    <property type="expression patterns" value="baseline and differential"/>
</dbReference>
<dbReference type="GO" id="GO:0005829">
    <property type="term" value="C:cytosol"/>
    <property type="evidence" value="ECO:0007005"/>
    <property type="project" value="TAIR"/>
</dbReference>
<dbReference type="GO" id="GO:0005576">
    <property type="term" value="C:extracellular region"/>
    <property type="evidence" value="ECO:0007005"/>
    <property type="project" value="TAIR"/>
</dbReference>
<dbReference type="GO" id="GO:0003860">
    <property type="term" value="F:3-hydroxyisobutyryl-CoA hydrolase activity"/>
    <property type="evidence" value="ECO:0007669"/>
    <property type="project" value="InterPro"/>
</dbReference>
<dbReference type="CDD" id="cd06558">
    <property type="entry name" value="crotonase-like"/>
    <property type="match status" value="1"/>
</dbReference>
<dbReference type="FunFam" id="3.90.226.10:FF:000027">
    <property type="entry name" value="Probable 3-hydroxyisobutyryl-CoA hydrolase 2"/>
    <property type="match status" value="1"/>
</dbReference>
<dbReference type="Gene3D" id="3.90.226.10">
    <property type="entry name" value="2-enoyl-CoA Hydratase, Chain A, domain 1"/>
    <property type="match status" value="1"/>
</dbReference>
<dbReference type="InterPro" id="IPR029045">
    <property type="entry name" value="ClpP/crotonase-like_dom_sf"/>
</dbReference>
<dbReference type="InterPro" id="IPR045004">
    <property type="entry name" value="ECH_dom"/>
</dbReference>
<dbReference type="InterPro" id="IPR032259">
    <property type="entry name" value="HIBYL-CoA-H"/>
</dbReference>
<dbReference type="NCBIfam" id="NF004127">
    <property type="entry name" value="PRK05617.1"/>
    <property type="match status" value="1"/>
</dbReference>
<dbReference type="PANTHER" id="PTHR43176:SF2">
    <property type="entry name" value="3-HYDROXYISOBUTYRYL-COA HYDROLASE-LIKE PROTEIN 5"/>
    <property type="match status" value="1"/>
</dbReference>
<dbReference type="PANTHER" id="PTHR43176">
    <property type="entry name" value="3-HYDROXYISOBUTYRYL-COA HYDROLASE-RELATED"/>
    <property type="match status" value="1"/>
</dbReference>
<dbReference type="Pfam" id="PF16113">
    <property type="entry name" value="ECH_2"/>
    <property type="match status" value="1"/>
</dbReference>
<dbReference type="SUPFAM" id="SSF52096">
    <property type="entry name" value="ClpP/crotonase"/>
    <property type="match status" value="1"/>
</dbReference>
<name>HIBC8_ARATH</name>
<proteinExistence type="evidence at protein level"/>
<protein>
    <recommendedName>
        <fullName>3-hydroxyisobutyryl-CoA hydrolase-like protein 5</fullName>
        <ecNumber>3.1.2.-</ecNumber>
    </recommendedName>
</protein>
<reference key="1">
    <citation type="journal article" date="2000" name="Nature">
        <title>Sequence and analysis of chromosome 1 of the plant Arabidopsis thaliana.</title>
        <authorList>
            <person name="Theologis A."/>
            <person name="Ecker J.R."/>
            <person name="Palm C.J."/>
            <person name="Federspiel N.A."/>
            <person name="Kaul S."/>
            <person name="White O."/>
            <person name="Alonso J."/>
            <person name="Altafi H."/>
            <person name="Araujo R."/>
            <person name="Bowman C.L."/>
            <person name="Brooks S.Y."/>
            <person name="Buehler E."/>
            <person name="Chan A."/>
            <person name="Chao Q."/>
            <person name="Chen H."/>
            <person name="Cheuk R.F."/>
            <person name="Chin C.W."/>
            <person name="Chung M.K."/>
            <person name="Conn L."/>
            <person name="Conway A.B."/>
            <person name="Conway A.R."/>
            <person name="Creasy T.H."/>
            <person name="Dewar K."/>
            <person name="Dunn P."/>
            <person name="Etgu P."/>
            <person name="Feldblyum T.V."/>
            <person name="Feng J.-D."/>
            <person name="Fong B."/>
            <person name="Fujii C.Y."/>
            <person name="Gill J.E."/>
            <person name="Goldsmith A.D."/>
            <person name="Haas B."/>
            <person name="Hansen N.F."/>
            <person name="Hughes B."/>
            <person name="Huizar L."/>
            <person name="Hunter J.L."/>
            <person name="Jenkins J."/>
            <person name="Johnson-Hopson C."/>
            <person name="Khan S."/>
            <person name="Khaykin E."/>
            <person name="Kim C.J."/>
            <person name="Koo H.L."/>
            <person name="Kremenetskaia I."/>
            <person name="Kurtz D.B."/>
            <person name="Kwan A."/>
            <person name="Lam B."/>
            <person name="Langin-Hooper S."/>
            <person name="Lee A."/>
            <person name="Lee J.M."/>
            <person name="Lenz C.A."/>
            <person name="Li J.H."/>
            <person name="Li Y.-P."/>
            <person name="Lin X."/>
            <person name="Liu S.X."/>
            <person name="Liu Z.A."/>
            <person name="Luros J.S."/>
            <person name="Maiti R."/>
            <person name="Marziali A."/>
            <person name="Militscher J."/>
            <person name="Miranda M."/>
            <person name="Nguyen M."/>
            <person name="Nierman W.C."/>
            <person name="Osborne B.I."/>
            <person name="Pai G."/>
            <person name="Peterson J."/>
            <person name="Pham P.K."/>
            <person name="Rizzo M."/>
            <person name="Rooney T."/>
            <person name="Rowley D."/>
            <person name="Sakano H."/>
            <person name="Salzberg S.L."/>
            <person name="Schwartz J.R."/>
            <person name="Shinn P."/>
            <person name="Southwick A.M."/>
            <person name="Sun H."/>
            <person name="Tallon L.J."/>
            <person name="Tambunga G."/>
            <person name="Toriumi M.J."/>
            <person name="Town C.D."/>
            <person name="Utterback T."/>
            <person name="Van Aken S."/>
            <person name="Vaysberg M."/>
            <person name="Vysotskaia V.S."/>
            <person name="Walker M."/>
            <person name="Wu D."/>
            <person name="Yu G."/>
            <person name="Fraser C.M."/>
            <person name="Venter J.C."/>
            <person name="Davis R.W."/>
        </authorList>
    </citation>
    <scope>NUCLEOTIDE SEQUENCE [LARGE SCALE GENOMIC DNA]</scope>
    <source>
        <strain>cv. Columbia</strain>
    </source>
</reference>
<reference key="2">
    <citation type="journal article" date="2017" name="Plant J.">
        <title>Araport11: a complete reannotation of the Arabidopsis thaliana reference genome.</title>
        <authorList>
            <person name="Cheng C.Y."/>
            <person name="Krishnakumar V."/>
            <person name="Chan A.P."/>
            <person name="Thibaud-Nissen F."/>
            <person name="Schobel S."/>
            <person name="Town C.D."/>
        </authorList>
    </citation>
    <scope>GENOME REANNOTATION</scope>
    <source>
        <strain>cv. Columbia</strain>
    </source>
</reference>
<reference key="3">
    <citation type="submission" date="2005-03" db="EMBL/GenBank/DDBJ databases">
        <title>Large-scale analysis of RIKEN Arabidopsis full-length (RAFL) cDNAs.</title>
        <authorList>
            <person name="Totoki Y."/>
            <person name="Seki M."/>
            <person name="Ishida J."/>
            <person name="Nakajima M."/>
            <person name="Enju A."/>
            <person name="Kamiya A."/>
            <person name="Narusaka M."/>
            <person name="Shin-i T."/>
            <person name="Nakagawa M."/>
            <person name="Sakamoto N."/>
            <person name="Oishi K."/>
            <person name="Kohara Y."/>
            <person name="Kobayashi M."/>
            <person name="Toyoda A."/>
            <person name="Sakaki Y."/>
            <person name="Sakurai T."/>
            <person name="Iida K."/>
            <person name="Akiyama K."/>
            <person name="Satou M."/>
            <person name="Toyoda T."/>
            <person name="Konagaya A."/>
            <person name="Carninci P."/>
            <person name="Kawai J."/>
            <person name="Hayashizaki Y."/>
            <person name="Shinozaki K."/>
        </authorList>
    </citation>
    <scope>NUCLEOTIDE SEQUENCE [LARGE SCALE MRNA]</scope>
    <source>
        <strain>cv. Columbia</strain>
    </source>
</reference>
<reference key="4">
    <citation type="submission" date="2006-07" db="EMBL/GenBank/DDBJ databases">
        <title>Arabidopsis ORF clones.</title>
        <authorList>
            <person name="Quinitio C."/>
            <person name="Chen H."/>
            <person name="Kim C.J."/>
            <person name="Shinn P."/>
            <person name="Ecker J.R."/>
        </authorList>
    </citation>
    <scope>NUCLEOTIDE SEQUENCE [LARGE SCALE MRNA]</scope>
</reference>
<reference key="5">
    <citation type="journal article" date="2001" name="J. Biol. Chem.">
        <title>chy1, an Arabidopsis mutant with impaired beta-oxidation, is defective in a peroxisomal beta-hydroxyisobutyryl-CoA hydrolase.</title>
        <authorList>
            <person name="Zolman B.K."/>
            <person name="Monroe-Augustus M."/>
            <person name="Thompson B."/>
            <person name="Hawes J.W."/>
            <person name="Krukenberg K.A."/>
            <person name="Matsuda S.P."/>
            <person name="Bartel B."/>
        </authorList>
    </citation>
    <scope>GENE FAMILY</scope>
</reference>
<reference key="6">
    <citation type="journal article" date="2012" name="Mol. Cell. Proteomics">
        <title>Comparative large-scale characterisation of plant vs. mammal proteins reveals similar and idiosyncratic N-alpha acetylation features.</title>
        <authorList>
            <person name="Bienvenut W.V."/>
            <person name="Sumpton D."/>
            <person name="Martinez A."/>
            <person name="Lilla S."/>
            <person name="Espagne C."/>
            <person name="Meinnel T."/>
            <person name="Giglione C."/>
        </authorList>
    </citation>
    <scope>ACETYLATION [LARGE SCALE ANALYSIS] AT ALA-2</scope>
    <scope>CLEAVAGE OF INITIATOR METHIONINE [LARGE SCALE ANALYSIS]</scope>
    <scope>IDENTIFICATION BY MASS SPECTROMETRY [LARGE SCALE ANALYSIS]</scope>
</reference>